<protein>
    <recommendedName>
        <fullName evidence="3">Insoluble matrix shell protein 4</fullName>
        <shortName evidence="3">IMSP4</shortName>
    </recommendedName>
</protein>
<name>IMSP4_RUDPH</name>
<accession>P86985</accession>
<sequence>HGNGYNSNNGNGYNSNNGNGYNSNNNGNTNCNFGNCNNANSFNNNGNTNSLNGNNNGNSNNNGNGNNNGNSNNNGNGNNNGNTNNGNSYDSNTNDDSNSIPNAVSVGGSNKLVIKTKSDDSSQTISLLDVFKNYDSNNNGNSNNNGSSYNRNDNGNSYNSNNNGNSYNRNDNGNSYNSNNNGNSYNRNDNGNSYNRNDNGNSYNSNNNGNTNSFNNNGNTNSFNNNGDTNRIDSNSYNSNNNGDNSNTNSVLVPEPTVIVIPAPVQQSVGCVCKPDYDPLLYTDNETYNNKCEAECEGKTVWYDKACY</sequence>
<feature type="chain" id="PRO_0000413028" description="Insoluble matrix shell protein 4">
    <location>
        <begin position="1"/>
        <end position="308"/>
    </location>
</feature>
<feature type="region of interest" description="Disordered" evidence="1">
    <location>
        <begin position="1"/>
        <end position="21"/>
    </location>
</feature>
<feature type="region of interest" description="Disordered" evidence="1">
    <location>
        <begin position="47"/>
        <end position="104"/>
    </location>
</feature>
<feature type="region of interest" description="Disordered" evidence="1">
    <location>
        <begin position="134"/>
        <end position="250"/>
    </location>
</feature>
<feature type="compositionally biased region" description="Low complexity" evidence="1">
    <location>
        <begin position="47"/>
        <end position="99"/>
    </location>
</feature>
<feature type="non-terminal residue" evidence="4">
    <location>
        <position position="1"/>
    </location>
</feature>
<comment type="subcellular location">
    <subcellularLocation>
        <location evidence="2">Secreted</location>
    </subcellularLocation>
</comment>
<comment type="tissue specificity">
    <text evidence="2">Component of the acid-insoluble organic matrix of the calcified shell.</text>
</comment>
<dbReference type="EMBL" id="AM875391">
    <property type="status" value="NOT_ANNOTATED_CDS"/>
    <property type="molecule type" value="mRNA"/>
</dbReference>
<dbReference type="EMBL" id="AM875417">
    <property type="status" value="NOT_ANNOTATED_CDS"/>
    <property type="molecule type" value="mRNA"/>
</dbReference>
<dbReference type="GO" id="GO:0005576">
    <property type="term" value="C:extracellular region"/>
    <property type="evidence" value="ECO:0007669"/>
    <property type="project" value="UniProtKB-SubCell"/>
</dbReference>
<dbReference type="CDD" id="cd00104">
    <property type="entry name" value="KAZAL_FS"/>
    <property type="match status" value="1"/>
</dbReference>
<dbReference type="Gene3D" id="3.30.60.30">
    <property type="match status" value="1"/>
</dbReference>
<dbReference type="InterPro" id="IPR036058">
    <property type="entry name" value="Kazal_dom_sf"/>
</dbReference>
<dbReference type="SUPFAM" id="SSF100895">
    <property type="entry name" value="Kazal-type serine protease inhibitors"/>
    <property type="match status" value="1"/>
</dbReference>
<keyword id="KW-0903">Direct protein sequencing</keyword>
<keyword id="KW-0964">Secreted</keyword>
<evidence type="ECO:0000256" key="1">
    <source>
        <dbReference type="SAM" id="MobiDB-lite"/>
    </source>
</evidence>
<evidence type="ECO:0000269" key="2">
    <source>
    </source>
</evidence>
<evidence type="ECO:0000303" key="3">
    <source>
    </source>
</evidence>
<evidence type="ECO:0000305" key="4"/>
<proteinExistence type="evidence at protein level"/>
<reference evidence="4" key="1">
    <citation type="submission" date="2007-09" db="EMBL/GenBank/DDBJ databases">
        <authorList>
            <person name="Beck A."/>
        </authorList>
    </citation>
    <scope>NUCLEOTIDE SEQUENCE [MRNA]</scope>
</reference>
<reference evidence="4" key="2">
    <citation type="journal article" date="2011" name="Mar. Biotechnol.">
        <title>Proteomic identification of novel proteins from the calcifying shell matrix of the manila clam Venerupis Philippinarum.</title>
        <authorList>
            <person name="Marie B."/>
            <person name="Trinkler N."/>
            <person name="Zanella-Cleon I."/>
            <person name="Guichard N."/>
            <person name="Becchi M."/>
            <person name="Paillard C."/>
            <person name="Marin F."/>
        </authorList>
    </citation>
    <scope>PROTEIN SEQUENCE OF 116-132</scope>
    <source>
        <tissue evidence="2">Shell</tissue>
    </source>
</reference>
<organism>
    <name type="scientific">Ruditapes philippinarum</name>
    <name type="common">Japanese carpet shell</name>
    <name type="synonym">Venerupis philippinarum</name>
    <dbReference type="NCBI Taxonomy" id="129788"/>
    <lineage>
        <taxon>Eukaryota</taxon>
        <taxon>Metazoa</taxon>
        <taxon>Spiralia</taxon>
        <taxon>Lophotrochozoa</taxon>
        <taxon>Mollusca</taxon>
        <taxon>Bivalvia</taxon>
        <taxon>Autobranchia</taxon>
        <taxon>Heteroconchia</taxon>
        <taxon>Euheterodonta</taxon>
        <taxon>Imparidentia</taxon>
        <taxon>Neoheterodontei</taxon>
        <taxon>Venerida</taxon>
        <taxon>Veneroidea</taxon>
        <taxon>Veneridae</taxon>
        <taxon>Ruditapes</taxon>
    </lineage>
</organism>